<name>YPFN_ECOLU</name>
<dbReference type="EMBL" id="CU928163">
    <property type="protein sequence ID" value="CAR13963.1"/>
    <property type="molecule type" value="Genomic_DNA"/>
</dbReference>
<dbReference type="RefSeq" id="WP_000383836.1">
    <property type="nucleotide sequence ID" value="NC_011751.1"/>
</dbReference>
<dbReference type="RefSeq" id="YP_002413490.1">
    <property type="nucleotide sequence ID" value="NC_011751.1"/>
</dbReference>
<dbReference type="SMR" id="B7N654"/>
<dbReference type="STRING" id="585056.ECUMN_2785"/>
<dbReference type="KEGG" id="eum:ECUMN_2785"/>
<dbReference type="PATRIC" id="fig|585056.7.peg.2969"/>
<dbReference type="HOGENOM" id="CLU_198936_0_0_6"/>
<dbReference type="Proteomes" id="UP000007097">
    <property type="component" value="Chromosome"/>
</dbReference>
<dbReference type="GO" id="GO:0005886">
    <property type="term" value="C:plasma membrane"/>
    <property type="evidence" value="ECO:0007669"/>
    <property type="project" value="UniProtKB-SubCell"/>
</dbReference>
<dbReference type="HAMAP" id="MF_01566">
    <property type="entry name" value="UPF0370"/>
    <property type="match status" value="1"/>
</dbReference>
<dbReference type="InterPro" id="IPR020910">
    <property type="entry name" value="UPF0370"/>
</dbReference>
<dbReference type="NCBIfam" id="NF010185">
    <property type="entry name" value="PRK13664.1"/>
    <property type="match status" value="1"/>
</dbReference>
<dbReference type="Pfam" id="PF13980">
    <property type="entry name" value="UPF0370"/>
    <property type="match status" value="1"/>
</dbReference>
<organism>
    <name type="scientific">Escherichia coli O17:K52:H18 (strain UMN026 / ExPEC)</name>
    <dbReference type="NCBI Taxonomy" id="585056"/>
    <lineage>
        <taxon>Bacteria</taxon>
        <taxon>Pseudomonadati</taxon>
        <taxon>Pseudomonadota</taxon>
        <taxon>Gammaproteobacteria</taxon>
        <taxon>Enterobacterales</taxon>
        <taxon>Enterobacteriaceae</taxon>
        <taxon>Escherichia</taxon>
    </lineage>
</organism>
<reference key="1">
    <citation type="journal article" date="2009" name="PLoS Genet.">
        <title>Organised genome dynamics in the Escherichia coli species results in highly diverse adaptive paths.</title>
        <authorList>
            <person name="Touchon M."/>
            <person name="Hoede C."/>
            <person name="Tenaillon O."/>
            <person name="Barbe V."/>
            <person name="Baeriswyl S."/>
            <person name="Bidet P."/>
            <person name="Bingen E."/>
            <person name="Bonacorsi S."/>
            <person name="Bouchier C."/>
            <person name="Bouvet O."/>
            <person name="Calteau A."/>
            <person name="Chiapello H."/>
            <person name="Clermont O."/>
            <person name="Cruveiller S."/>
            <person name="Danchin A."/>
            <person name="Diard M."/>
            <person name="Dossat C."/>
            <person name="Karoui M.E."/>
            <person name="Frapy E."/>
            <person name="Garry L."/>
            <person name="Ghigo J.M."/>
            <person name="Gilles A.M."/>
            <person name="Johnson J."/>
            <person name="Le Bouguenec C."/>
            <person name="Lescat M."/>
            <person name="Mangenot S."/>
            <person name="Martinez-Jehanne V."/>
            <person name="Matic I."/>
            <person name="Nassif X."/>
            <person name="Oztas S."/>
            <person name="Petit M.A."/>
            <person name="Pichon C."/>
            <person name="Rouy Z."/>
            <person name="Ruf C.S."/>
            <person name="Schneider D."/>
            <person name="Tourret J."/>
            <person name="Vacherie B."/>
            <person name="Vallenet D."/>
            <person name="Medigue C."/>
            <person name="Rocha E.P.C."/>
            <person name="Denamur E."/>
        </authorList>
    </citation>
    <scope>NUCLEOTIDE SEQUENCE [LARGE SCALE GENOMIC DNA]</scope>
    <source>
        <strain>UMN026 / ExPEC</strain>
    </source>
</reference>
<keyword id="KW-1003">Cell membrane</keyword>
<keyword id="KW-0472">Membrane</keyword>
<keyword id="KW-0812">Transmembrane</keyword>
<keyword id="KW-1133">Transmembrane helix</keyword>
<sequence length="66" mass="8071">MDWLAKYWWILVIVFLVGVLLNVIKDLKRVDHKKFLANKPELPPHRDFNDKWDDDDDWPKKDQPKK</sequence>
<gene>
    <name evidence="1" type="primary">ypfN</name>
    <name type="ordered locus">ECUMN_2785</name>
</gene>
<proteinExistence type="inferred from homology"/>
<protein>
    <recommendedName>
        <fullName evidence="1">UPF0370 protein YpfN</fullName>
    </recommendedName>
</protein>
<evidence type="ECO:0000255" key="1">
    <source>
        <dbReference type="HAMAP-Rule" id="MF_01566"/>
    </source>
</evidence>
<evidence type="ECO:0000256" key="2">
    <source>
        <dbReference type="SAM" id="MobiDB-lite"/>
    </source>
</evidence>
<accession>B7N654</accession>
<feature type="chain" id="PRO_1000199722" description="UPF0370 protein YpfN">
    <location>
        <begin position="1"/>
        <end position="66"/>
    </location>
</feature>
<feature type="transmembrane region" description="Helical" evidence="1">
    <location>
        <begin position="4"/>
        <end position="24"/>
    </location>
</feature>
<feature type="region of interest" description="Disordered" evidence="2">
    <location>
        <begin position="39"/>
        <end position="66"/>
    </location>
</feature>
<feature type="compositionally biased region" description="Basic and acidic residues" evidence="2">
    <location>
        <begin position="42"/>
        <end position="51"/>
    </location>
</feature>
<comment type="subcellular location">
    <subcellularLocation>
        <location evidence="1">Cell membrane</location>
        <topology evidence="1">Single-pass membrane protein</topology>
    </subcellularLocation>
</comment>
<comment type="similarity">
    <text evidence="1">Belongs to the UPF0370 family.</text>
</comment>